<keyword id="KW-0067">ATP-binding</keyword>
<keyword id="KW-0418">Kinase</keyword>
<keyword id="KW-0441">Lipid A biosynthesis</keyword>
<keyword id="KW-0444">Lipid biosynthesis</keyword>
<keyword id="KW-0443">Lipid metabolism</keyword>
<keyword id="KW-0547">Nucleotide-binding</keyword>
<keyword id="KW-0808">Transferase</keyword>
<organism>
    <name type="scientific">Aliivibrio fischeri (strain MJ11)</name>
    <name type="common">Vibrio fischeri</name>
    <dbReference type="NCBI Taxonomy" id="388396"/>
    <lineage>
        <taxon>Bacteria</taxon>
        <taxon>Pseudomonadati</taxon>
        <taxon>Pseudomonadota</taxon>
        <taxon>Gammaproteobacteria</taxon>
        <taxon>Vibrionales</taxon>
        <taxon>Vibrionaceae</taxon>
        <taxon>Aliivibrio</taxon>
    </lineage>
</organism>
<feature type="chain" id="PRO_1000123750" description="Tetraacyldisaccharide 4'-kinase">
    <location>
        <begin position="1"/>
        <end position="328"/>
    </location>
</feature>
<feature type="binding site" evidence="1">
    <location>
        <begin position="59"/>
        <end position="66"/>
    </location>
    <ligand>
        <name>ATP</name>
        <dbReference type="ChEBI" id="CHEBI:30616"/>
    </ligand>
</feature>
<accession>B5ETK5</accession>
<name>LPXK_ALIFM</name>
<evidence type="ECO:0000255" key="1">
    <source>
        <dbReference type="HAMAP-Rule" id="MF_00409"/>
    </source>
</evidence>
<reference key="1">
    <citation type="submission" date="2008-08" db="EMBL/GenBank/DDBJ databases">
        <title>Complete sequence of Vibrio fischeri strain MJ11.</title>
        <authorList>
            <person name="Mandel M.J."/>
            <person name="Stabb E.V."/>
            <person name="Ruby E.G."/>
            <person name="Ferriera S."/>
            <person name="Johnson J."/>
            <person name="Kravitz S."/>
            <person name="Beeson K."/>
            <person name="Sutton G."/>
            <person name="Rogers Y.-H."/>
            <person name="Friedman R."/>
            <person name="Frazier M."/>
            <person name="Venter J.C."/>
        </authorList>
    </citation>
    <scope>NUCLEOTIDE SEQUENCE [LARGE SCALE GENOMIC DNA]</scope>
    <source>
        <strain>MJ11</strain>
    </source>
</reference>
<gene>
    <name evidence="1" type="primary">lpxK</name>
    <name type="ordered locus">VFMJ11_A0474</name>
</gene>
<dbReference type="EC" id="2.7.1.130" evidence="1"/>
<dbReference type="EMBL" id="CP001133">
    <property type="protein sequence ID" value="ACH63973.1"/>
    <property type="molecule type" value="Genomic_DNA"/>
</dbReference>
<dbReference type="RefSeq" id="WP_012535128.1">
    <property type="nucleotide sequence ID" value="NC_011186.1"/>
</dbReference>
<dbReference type="SMR" id="B5ETK5"/>
<dbReference type="KEGG" id="vfm:VFMJ11_A0474"/>
<dbReference type="HOGENOM" id="CLU_038816_2_0_6"/>
<dbReference type="UniPathway" id="UPA00359">
    <property type="reaction ID" value="UER00482"/>
</dbReference>
<dbReference type="Proteomes" id="UP000001857">
    <property type="component" value="Chromosome II"/>
</dbReference>
<dbReference type="GO" id="GO:0005886">
    <property type="term" value="C:plasma membrane"/>
    <property type="evidence" value="ECO:0007669"/>
    <property type="project" value="TreeGrafter"/>
</dbReference>
<dbReference type="GO" id="GO:0005524">
    <property type="term" value="F:ATP binding"/>
    <property type="evidence" value="ECO:0007669"/>
    <property type="project" value="UniProtKB-UniRule"/>
</dbReference>
<dbReference type="GO" id="GO:0009029">
    <property type="term" value="F:tetraacyldisaccharide 4'-kinase activity"/>
    <property type="evidence" value="ECO:0007669"/>
    <property type="project" value="UniProtKB-UniRule"/>
</dbReference>
<dbReference type="GO" id="GO:0009245">
    <property type="term" value="P:lipid A biosynthetic process"/>
    <property type="evidence" value="ECO:0007669"/>
    <property type="project" value="UniProtKB-UniRule"/>
</dbReference>
<dbReference type="GO" id="GO:0009244">
    <property type="term" value="P:lipopolysaccharide core region biosynthetic process"/>
    <property type="evidence" value="ECO:0007669"/>
    <property type="project" value="TreeGrafter"/>
</dbReference>
<dbReference type="HAMAP" id="MF_00409">
    <property type="entry name" value="LpxK"/>
    <property type="match status" value="1"/>
</dbReference>
<dbReference type="InterPro" id="IPR003758">
    <property type="entry name" value="LpxK"/>
</dbReference>
<dbReference type="InterPro" id="IPR027417">
    <property type="entry name" value="P-loop_NTPase"/>
</dbReference>
<dbReference type="NCBIfam" id="TIGR00682">
    <property type="entry name" value="lpxK"/>
    <property type="match status" value="1"/>
</dbReference>
<dbReference type="PANTHER" id="PTHR42724">
    <property type="entry name" value="TETRAACYLDISACCHARIDE 4'-KINASE"/>
    <property type="match status" value="1"/>
</dbReference>
<dbReference type="PANTHER" id="PTHR42724:SF1">
    <property type="entry name" value="TETRAACYLDISACCHARIDE 4'-KINASE, MITOCHONDRIAL-RELATED"/>
    <property type="match status" value="1"/>
</dbReference>
<dbReference type="Pfam" id="PF02606">
    <property type="entry name" value="LpxK"/>
    <property type="match status" value="1"/>
</dbReference>
<dbReference type="SUPFAM" id="SSF52540">
    <property type="entry name" value="P-loop containing nucleoside triphosphate hydrolases"/>
    <property type="match status" value="1"/>
</dbReference>
<protein>
    <recommendedName>
        <fullName evidence="1">Tetraacyldisaccharide 4'-kinase</fullName>
        <ecNumber evidence="1">2.7.1.130</ecNumber>
    </recommendedName>
    <alternativeName>
        <fullName evidence="1">Lipid A 4'-kinase</fullName>
    </alternativeName>
</protein>
<comment type="function">
    <text evidence="1">Transfers the gamma-phosphate of ATP to the 4'-position of a tetraacyldisaccharide 1-phosphate intermediate (termed DS-1-P) to form tetraacyldisaccharide 1,4'-bis-phosphate (lipid IVA).</text>
</comment>
<comment type="catalytic activity">
    <reaction evidence="1">
        <text>a lipid A disaccharide + ATP = a lipid IVA + ADP + H(+)</text>
        <dbReference type="Rhea" id="RHEA:67840"/>
        <dbReference type="ChEBI" id="CHEBI:15378"/>
        <dbReference type="ChEBI" id="CHEBI:30616"/>
        <dbReference type="ChEBI" id="CHEBI:176343"/>
        <dbReference type="ChEBI" id="CHEBI:176425"/>
        <dbReference type="ChEBI" id="CHEBI:456216"/>
        <dbReference type="EC" id="2.7.1.130"/>
    </reaction>
</comment>
<comment type="pathway">
    <text evidence="1">Glycolipid biosynthesis; lipid IV(A) biosynthesis; lipid IV(A) from (3R)-3-hydroxytetradecanoyl-[acyl-carrier-protein] and UDP-N-acetyl-alpha-D-glucosamine: step 6/6.</text>
</comment>
<comment type="similarity">
    <text evidence="1">Belongs to the LpxK family.</text>
</comment>
<proteinExistence type="inferred from homology"/>
<sequence>MIEKIWFDNHFLGKLLWPLLWPLSCLFKWIATKRKSDYQSGKKQSYRSSVPVVVVGNITAGGNGKTPVVVWLVEQLQSKGYKVGVASRGYGGKAPHYPYLLTETTTPDISGDEPVLIKQRTKAEVAVAPVRSEAVKMLEQQGVDFIITDDGLQHYALQRDIEFIVIDGKRRFGNQHYIPLGPLREGVERLSSVDFLICNGGEPQENEVSMRLQPSEAINLVTGERRSVSSLSNLVAFAGIGHPPRFFETLNQLKANVVHTQGFEDHKAFEPTEIEQLMQYGEQLIMTEKDAVKCQSFAQSSWWYLPVDATFPEEKAQQILNKIIEVKE</sequence>